<gene>
    <name evidence="4" type="primary">Or5p67</name>
    <name evidence="4" type="synonym">Mor204-18</name>
    <name evidence="4" type="synonym">Olfr492</name>
</gene>
<accession>Q8VFD1</accession>
<protein>
    <recommendedName>
        <fullName evidence="3">Olfactory receptor 5P67</fullName>
    </recommendedName>
    <alternativeName>
        <fullName>Olfactory receptor 204-18</fullName>
    </alternativeName>
    <alternativeName>
        <fullName>Olfactory receptor 492</fullName>
    </alternativeName>
</protein>
<dbReference type="EMBL" id="AY073600">
    <property type="protein sequence ID" value="AAL61263.1"/>
    <property type="molecule type" value="Genomic_DNA"/>
</dbReference>
<dbReference type="EMBL" id="AY317600">
    <property type="protein sequence ID" value="AAP70995.1"/>
    <property type="molecule type" value="Genomic_DNA"/>
</dbReference>
<dbReference type="CCDS" id="CCDS85376.1"/>
<dbReference type="RefSeq" id="NP_666708.1">
    <property type="nucleotide sequence ID" value="NM_146497.1"/>
</dbReference>
<dbReference type="SMR" id="Q8VFD1"/>
<dbReference type="FunCoup" id="Q8VFD1">
    <property type="interactions" value="1138"/>
</dbReference>
<dbReference type="STRING" id="10090.ENSMUSP00000146417"/>
<dbReference type="GlyCosmos" id="Q8VFD1">
    <property type="glycosylation" value="2 sites, No reported glycans"/>
</dbReference>
<dbReference type="GlyGen" id="Q8VFD1">
    <property type="glycosylation" value="2 sites"/>
</dbReference>
<dbReference type="Ensembl" id="ENSMUST00000079865.5">
    <property type="protein sequence ID" value="ENSMUSP00000146417.2"/>
    <property type="gene ID" value="ENSMUSG00000109497.2"/>
</dbReference>
<dbReference type="GeneID" id="258490"/>
<dbReference type="KEGG" id="mmu:258490"/>
<dbReference type="UCSC" id="uc009jcg.1">
    <property type="organism name" value="mouse"/>
</dbReference>
<dbReference type="AGR" id="MGI:3030326"/>
<dbReference type="CTD" id="258490"/>
<dbReference type="MGI" id="MGI:3030326">
    <property type="gene designation" value="Or5p67"/>
</dbReference>
<dbReference type="VEuPathDB" id="HostDB:ENSMUSG00000109497"/>
<dbReference type="GeneTree" id="ENSGT01130000278279"/>
<dbReference type="InParanoid" id="Q8VFD1"/>
<dbReference type="OMA" id="GCTIQFG"/>
<dbReference type="OrthoDB" id="9440694at2759"/>
<dbReference type="PhylomeDB" id="Q8VFD1"/>
<dbReference type="BioGRID-ORCS" id="258490">
    <property type="hits" value="4 hits in 13 CRISPR screens"/>
</dbReference>
<dbReference type="PRO" id="PR:Q8VFD1"/>
<dbReference type="Proteomes" id="UP000000589">
    <property type="component" value="Chromosome 7"/>
</dbReference>
<dbReference type="RNAct" id="Q8VFD1">
    <property type="molecule type" value="protein"/>
</dbReference>
<dbReference type="Bgee" id="ENSMUSG00000109497">
    <property type="expression patterns" value="Expressed in undifferentiated genital tubercle"/>
</dbReference>
<dbReference type="GO" id="GO:0016020">
    <property type="term" value="C:membrane"/>
    <property type="evidence" value="ECO:0000247"/>
    <property type="project" value="MGI"/>
</dbReference>
<dbReference type="GO" id="GO:0005886">
    <property type="term" value="C:plasma membrane"/>
    <property type="evidence" value="ECO:0007669"/>
    <property type="project" value="UniProtKB-SubCell"/>
</dbReference>
<dbReference type="GO" id="GO:0004930">
    <property type="term" value="F:G protein-coupled receptor activity"/>
    <property type="evidence" value="ECO:0007669"/>
    <property type="project" value="UniProtKB-KW"/>
</dbReference>
<dbReference type="GO" id="GO:0004984">
    <property type="term" value="F:olfactory receptor activity"/>
    <property type="evidence" value="ECO:0000247"/>
    <property type="project" value="MGI"/>
</dbReference>
<dbReference type="GO" id="GO:0007186">
    <property type="term" value="P:G protein-coupled receptor signaling pathway"/>
    <property type="evidence" value="ECO:0000247"/>
    <property type="project" value="MGI"/>
</dbReference>
<dbReference type="GO" id="GO:0007608">
    <property type="term" value="P:sensory perception of smell"/>
    <property type="evidence" value="ECO:0000247"/>
    <property type="project" value="MGI"/>
</dbReference>
<dbReference type="CDD" id="cd15416">
    <property type="entry name" value="7tmA_OR5P-like"/>
    <property type="match status" value="1"/>
</dbReference>
<dbReference type="FunFam" id="1.20.1070.10:FF:000004">
    <property type="entry name" value="Olfactory receptor"/>
    <property type="match status" value="1"/>
</dbReference>
<dbReference type="Gene3D" id="1.20.1070.10">
    <property type="entry name" value="Rhodopsin 7-helix transmembrane proteins"/>
    <property type="match status" value="1"/>
</dbReference>
<dbReference type="InterPro" id="IPR000276">
    <property type="entry name" value="GPCR_Rhodpsn"/>
</dbReference>
<dbReference type="InterPro" id="IPR017452">
    <property type="entry name" value="GPCR_Rhodpsn_7TM"/>
</dbReference>
<dbReference type="InterPro" id="IPR000725">
    <property type="entry name" value="Olfact_rcpt"/>
</dbReference>
<dbReference type="PANTHER" id="PTHR48018">
    <property type="entry name" value="OLFACTORY RECEPTOR"/>
    <property type="match status" value="1"/>
</dbReference>
<dbReference type="Pfam" id="PF13853">
    <property type="entry name" value="7tm_4"/>
    <property type="match status" value="1"/>
</dbReference>
<dbReference type="PRINTS" id="PR00237">
    <property type="entry name" value="GPCRRHODOPSN"/>
</dbReference>
<dbReference type="PRINTS" id="PR00245">
    <property type="entry name" value="OLFACTORYR"/>
</dbReference>
<dbReference type="SUPFAM" id="SSF81321">
    <property type="entry name" value="Family A G protein-coupled receptor-like"/>
    <property type="match status" value="1"/>
</dbReference>
<dbReference type="PROSITE" id="PS00237">
    <property type="entry name" value="G_PROTEIN_RECEP_F1_1"/>
    <property type="match status" value="1"/>
</dbReference>
<dbReference type="PROSITE" id="PS50262">
    <property type="entry name" value="G_PROTEIN_RECEP_F1_2"/>
    <property type="match status" value="1"/>
</dbReference>
<comment type="function">
    <text>Potential odorant receptor.</text>
</comment>
<comment type="subcellular location">
    <subcellularLocation>
        <location evidence="3">Cell membrane</location>
        <topology evidence="1">Multi-pass membrane protein</topology>
    </subcellularLocation>
</comment>
<comment type="similarity">
    <text evidence="2">Belongs to the G-protein coupled receptor 1 family.</text>
</comment>
<keyword id="KW-1003">Cell membrane</keyword>
<keyword id="KW-1015">Disulfide bond</keyword>
<keyword id="KW-0297">G-protein coupled receptor</keyword>
<keyword id="KW-0325">Glycoprotein</keyword>
<keyword id="KW-0472">Membrane</keyword>
<keyword id="KW-0552">Olfaction</keyword>
<keyword id="KW-0675">Receptor</keyword>
<keyword id="KW-1185">Reference proteome</keyword>
<keyword id="KW-0716">Sensory transduction</keyword>
<keyword id="KW-0807">Transducer</keyword>
<keyword id="KW-0812">Transmembrane</keyword>
<keyword id="KW-1133">Transmembrane helix</keyword>
<name>O5P67_MOUSE</name>
<reference key="1">
    <citation type="journal article" date="2002" name="Nat. Neurosci.">
        <title>The olfactory receptor gene superfamily of the mouse.</title>
        <authorList>
            <person name="Zhang X."/>
            <person name="Firestein S."/>
        </authorList>
    </citation>
    <scope>NUCLEOTIDE SEQUENCE [GENOMIC DNA]</scope>
</reference>
<reference key="2">
    <citation type="journal article" date="2002" name="Hum. Mol. Genet.">
        <title>Different evolutionary processes shaped the mouse and human olfactory receptor gene families.</title>
        <authorList>
            <person name="Young J.M."/>
            <person name="Friedman C."/>
            <person name="Williams E.M."/>
            <person name="Ross J.A."/>
            <person name="Tonnes-Priddy L."/>
            <person name="Trask B.J."/>
        </authorList>
    </citation>
    <scope>NUCLEOTIDE SEQUENCE [GENOMIC DNA]</scope>
</reference>
<reference key="3">
    <citation type="journal article" date="2002" name="Hum. Mol. Genet.">
        <authorList>
            <person name="Young J.M."/>
            <person name="Friedman C."/>
            <person name="Williams E.M."/>
            <person name="Ross J.A."/>
            <person name="Tonnes-Priddy L."/>
            <person name="Trask B.J."/>
        </authorList>
    </citation>
    <scope>ERRATUM OF PUBMED:11875048</scope>
</reference>
<sequence length="314" mass="34717">MAFLEDGNHTAVTEFILLGLTDDPVLRVILFTIILCIYLVTVSGNLSTILLIRVSSQLHHPMYFFLSHVGSVDIGYSSSVTPNMLVNFLVEKHTIAYLGCGIQLSSAAFFGTAECFLLATMAYDRFVAICNPLLYSTKMSTQTCIQLVVGSYTGGILNASFAIISFFSFLFCGPNRINHFYCDFAPLVELSCSDINVSVVITTIFSASVTIITVFVIAISYTYILITILKMRSTEGRHKAFSTCTSYLTAVTLFYGTVTFIYVVPKSNYSTDQNKVASVFYIVVIPMLNPLIYSLRNNDIKGALKRQLGKKTFS</sequence>
<evidence type="ECO:0000255" key="1"/>
<evidence type="ECO:0000255" key="2">
    <source>
        <dbReference type="PROSITE-ProRule" id="PRU00521"/>
    </source>
</evidence>
<evidence type="ECO:0000305" key="3"/>
<evidence type="ECO:0000312" key="4">
    <source>
        <dbReference type="MGI" id="MGI:3030326"/>
    </source>
</evidence>
<proteinExistence type="inferred from homology"/>
<organism>
    <name type="scientific">Mus musculus</name>
    <name type="common">Mouse</name>
    <dbReference type="NCBI Taxonomy" id="10090"/>
    <lineage>
        <taxon>Eukaryota</taxon>
        <taxon>Metazoa</taxon>
        <taxon>Chordata</taxon>
        <taxon>Craniata</taxon>
        <taxon>Vertebrata</taxon>
        <taxon>Euteleostomi</taxon>
        <taxon>Mammalia</taxon>
        <taxon>Eutheria</taxon>
        <taxon>Euarchontoglires</taxon>
        <taxon>Glires</taxon>
        <taxon>Rodentia</taxon>
        <taxon>Myomorpha</taxon>
        <taxon>Muroidea</taxon>
        <taxon>Muridae</taxon>
        <taxon>Murinae</taxon>
        <taxon>Mus</taxon>
        <taxon>Mus</taxon>
    </lineage>
</organism>
<feature type="chain" id="PRO_0000150847" description="Olfactory receptor 5P67">
    <location>
        <begin position="1"/>
        <end position="314"/>
    </location>
</feature>
<feature type="topological domain" description="Extracellular" evidence="1">
    <location>
        <begin position="1"/>
        <end position="28"/>
    </location>
</feature>
<feature type="transmembrane region" description="Helical; Name=1" evidence="1">
    <location>
        <begin position="29"/>
        <end position="49"/>
    </location>
</feature>
<feature type="topological domain" description="Cytoplasmic" evidence="1">
    <location>
        <begin position="50"/>
        <end position="57"/>
    </location>
</feature>
<feature type="transmembrane region" description="Helical; Name=2" evidence="1">
    <location>
        <begin position="58"/>
        <end position="78"/>
    </location>
</feature>
<feature type="topological domain" description="Extracellular" evidence="1">
    <location>
        <begin position="79"/>
        <end position="102"/>
    </location>
</feature>
<feature type="transmembrane region" description="Helical; Name=3" evidence="1">
    <location>
        <begin position="103"/>
        <end position="123"/>
    </location>
</feature>
<feature type="topological domain" description="Cytoplasmic" evidence="1">
    <location>
        <begin position="124"/>
        <end position="136"/>
    </location>
</feature>
<feature type="transmembrane region" description="Helical; Name=4" evidence="1">
    <location>
        <begin position="137"/>
        <end position="157"/>
    </location>
</feature>
<feature type="topological domain" description="Extracellular" evidence="1">
    <location>
        <begin position="158"/>
        <end position="199"/>
    </location>
</feature>
<feature type="transmembrane region" description="Helical; Name=5" evidence="1">
    <location>
        <begin position="200"/>
        <end position="220"/>
    </location>
</feature>
<feature type="topological domain" description="Cytoplasmic" evidence="1">
    <location>
        <begin position="221"/>
        <end position="240"/>
    </location>
</feature>
<feature type="transmembrane region" description="Helical; Name=6" evidence="1">
    <location>
        <begin position="241"/>
        <end position="261"/>
    </location>
</feature>
<feature type="topological domain" description="Extracellular" evidence="1">
    <location>
        <begin position="262"/>
        <end position="274"/>
    </location>
</feature>
<feature type="transmembrane region" description="Helical; Name=7" evidence="1">
    <location>
        <begin position="275"/>
        <end position="295"/>
    </location>
</feature>
<feature type="topological domain" description="Cytoplasmic" evidence="1">
    <location>
        <begin position="296"/>
        <end position="314"/>
    </location>
</feature>
<feature type="glycosylation site" description="N-linked (GlcNAc...) asparagine" evidence="1">
    <location>
        <position position="8"/>
    </location>
</feature>
<feature type="glycosylation site" description="N-linked (GlcNAc...) asparagine" evidence="1">
    <location>
        <position position="268"/>
    </location>
</feature>
<feature type="disulfide bond" evidence="2">
    <location>
        <begin position="100"/>
        <end position="192"/>
    </location>
</feature>